<protein>
    <recommendedName>
        <fullName evidence="1">Vasoactive intestinal polypeptide receptor 1</fullName>
        <shortName>VIP-R-1</shortName>
    </recommendedName>
    <alternativeName>
        <fullName>Pituitary adenylate cyclase-activating polypeptide type II receptor</fullName>
        <shortName>PACAP type II receptor</shortName>
        <shortName>PACAP-R-2</shortName>
        <shortName>PACAP-R2</shortName>
    </alternativeName>
    <alternativeName>
        <fullName evidence="1">VPAC1 receptor</fullName>
        <shortName evidence="10">VPAC1R</shortName>
    </alternativeName>
</protein>
<organism>
    <name type="scientific">Homo sapiens</name>
    <name type="common">Human</name>
    <dbReference type="NCBI Taxonomy" id="9606"/>
    <lineage>
        <taxon>Eukaryota</taxon>
        <taxon>Metazoa</taxon>
        <taxon>Chordata</taxon>
        <taxon>Craniata</taxon>
        <taxon>Vertebrata</taxon>
        <taxon>Euteleostomi</taxon>
        <taxon>Mammalia</taxon>
        <taxon>Eutheria</taxon>
        <taxon>Euarchontoglires</taxon>
        <taxon>Primates</taxon>
        <taxon>Haplorrhini</taxon>
        <taxon>Catarrhini</taxon>
        <taxon>Hominidae</taxon>
        <taxon>Homo</taxon>
    </lineage>
</organism>
<keyword id="KW-0002">3D-structure</keyword>
<keyword id="KW-0025">Alternative splicing</keyword>
<keyword id="KW-1003">Cell membrane</keyword>
<keyword id="KW-1015">Disulfide bond</keyword>
<keyword id="KW-0297">G-protein coupled receptor</keyword>
<keyword id="KW-0325">Glycoprotein</keyword>
<keyword id="KW-0472">Membrane</keyword>
<keyword id="KW-1267">Proteomics identification</keyword>
<keyword id="KW-0675">Receptor</keyword>
<keyword id="KW-1185">Reference proteome</keyword>
<keyword id="KW-0732">Signal</keyword>
<keyword id="KW-0807">Transducer</keyword>
<keyword id="KW-0812">Transmembrane</keyword>
<keyword id="KW-1133">Transmembrane helix</keyword>
<gene>
    <name evidence="13" type="primary">VIPR1</name>
</gene>
<sequence>MRPPSPLPARWLCVLAGALAWALGPAGGQAARLQEECDYVQMIEVQHKQCLEEAQLENETIGCSKMWDNLTCWPATPRGQVVVLACPLIFKLFSSIQGRNVSRSCTDEGWTHLEPGPYPIACGLDDKAASLDEQQTMFYGSVKTGYTIGYGLSLATLLVATAILSLFRKLHCTRNYIHMHLFISFILRAAAVFIKDLALFDSGESDQCSEGSVGCKAAMVFFQYCVMANFFWLLVEGLYLYTLLAVSFFSERKYFWGYILIGWGVPSTFTMVWTIARIHFEDYGCWDTINSSLWWIIKGPILTSILVNFILFICIIRILLQKLRPPDIRKSDSSPYSRLARSTLLLIPLFGVHYIMFAFFPDNFKPEVKMVFELVVGSFQGFVVAILYCFLNGEVQAELRRKWRRWHLQGVLGWNPKYRHPSGGSNGATCSTQVSMLTRVSPGARRSSSFQAEVSLV</sequence>
<reference key="1">
    <citation type="journal article" date="1993" name="Biochem. Biophys. Res. Commun.">
        <title>Cloning and functional expression of a human neuroendocrine vasoactive intestinal peptide receptor.</title>
        <authorList>
            <person name="Sreedharan S.P."/>
            <person name="Patel D.R."/>
            <person name="Huang J.-X."/>
            <person name="Goetzl E.J."/>
        </authorList>
    </citation>
    <scope>NUCLEOTIDE SEQUENCE [GENOMIC DNA / MRNA] (ISOFORM SHORT)</scope>
    <source>
        <tissue>Intestine</tissue>
    </source>
</reference>
<reference key="2">
    <citation type="journal article" date="1994" name="Biochem. Biophys. Res. Commun.">
        <title>Human intestinal VIP receptor: cloning and functional expression of two cDNA encoding proteins with different N-terminal domains.</title>
        <authorList>
            <person name="Couvineau A."/>
            <person name="Rouyer-Fessard C."/>
            <person name="Darmoul D."/>
            <person name="Maoret J.J."/>
            <person name="Carrero I."/>
            <person name="Ogier-Denis E."/>
            <person name="Laburthe M."/>
        </authorList>
    </citation>
    <scope>NUCLEOTIDE SEQUENCE [MRNA] (ISOFORMS SHORT AND LONG)</scope>
    <scope>ALTERNATIVE SPLICING</scope>
    <scope>FUNCTION</scope>
    <scope>SUBCELLULAR LOCATION</scope>
    <source>
        <tissue>Intestine</tissue>
    </source>
</reference>
<reference key="3">
    <citation type="submission" date="2001-07" db="EMBL/GenBank/DDBJ databases">
        <title>Genome-wide discovery and analysis of human seven transmembrane helix receptor genes.</title>
        <authorList>
            <person name="Suwa M."/>
            <person name="Sato T."/>
            <person name="Okouchi I."/>
            <person name="Arita M."/>
            <person name="Futami K."/>
            <person name="Matsumoto S."/>
            <person name="Tsutsumi S."/>
            <person name="Aburatani H."/>
            <person name="Asai K."/>
            <person name="Akiyama Y."/>
        </authorList>
    </citation>
    <scope>NUCLEOTIDE SEQUENCE [GENOMIC DNA]</scope>
</reference>
<reference key="4">
    <citation type="submission" date="2007-04" db="EMBL/GenBank/DDBJ databases">
        <authorList>
            <person name="Martin A.L."/>
            <person name="Kaighin V.A."/>
            <person name="Aronstam R.S."/>
        </authorList>
    </citation>
    <scope>NUCLEOTIDE SEQUENCE [MRNA] (ISOFORM SHORT)</scope>
    <source>
        <tissue>Lung</tissue>
    </source>
</reference>
<reference key="5">
    <citation type="journal article" date="2004" name="Nat. Genet.">
        <title>Complete sequencing and characterization of 21,243 full-length human cDNAs.</title>
        <authorList>
            <person name="Ota T."/>
            <person name="Suzuki Y."/>
            <person name="Nishikawa T."/>
            <person name="Otsuki T."/>
            <person name="Sugiyama T."/>
            <person name="Irie R."/>
            <person name="Wakamatsu A."/>
            <person name="Hayashi K."/>
            <person name="Sato H."/>
            <person name="Nagai K."/>
            <person name="Kimura K."/>
            <person name="Makita H."/>
            <person name="Sekine M."/>
            <person name="Obayashi M."/>
            <person name="Nishi T."/>
            <person name="Shibahara T."/>
            <person name="Tanaka T."/>
            <person name="Ishii S."/>
            <person name="Yamamoto J."/>
            <person name="Saito K."/>
            <person name="Kawai Y."/>
            <person name="Isono Y."/>
            <person name="Nakamura Y."/>
            <person name="Nagahari K."/>
            <person name="Murakami K."/>
            <person name="Yasuda T."/>
            <person name="Iwayanagi T."/>
            <person name="Wagatsuma M."/>
            <person name="Shiratori A."/>
            <person name="Sudo H."/>
            <person name="Hosoiri T."/>
            <person name="Kaku Y."/>
            <person name="Kodaira H."/>
            <person name="Kondo H."/>
            <person name="Sugawara M."/>
            <person name="Takahashi M."/>
            <person name="Kanda K."/>
            <person name="Yokoi T."/>
            <person name="Furuya T."/>
            <person name="Kikkawa E."/>
            <person name="Omura Y."/>
            <person name="Abe K."/>
            <person name="Kamihara K."/>
            <person name="Katsuta N."/>
            <person name="Sato K."/>
            <person name="Tanikawa M."/>
            <person name="Yamazaki M."/>
            <person name="Ninomiya K."/>
            <person name="Ishibashi T."/>
            <person name="Yamashita H."/>
            <person name="Murakawa K."/>
            <person name="Fujimori K."/>
            <person name="Tanai H."/>
            <person name="Kimata M."/>
            <person name="Watanabe M."/>
            <person name="Hiraoka S."/>
            <person name="Chiba Y."/>
            <person name="Ishida S."/>
            <person name="Ono Y."/>
            <person name="Takiguchi S."/>
            <person name="Watanabe S."/>
            <person name="Yosida M."/>
            <person name="Hotuta T."/>
            <person name="Kusano J."/>
            <person name="Kanehori K."/>
            <person name="Takahashi-Fujii A."/>
            <person name="Hara H."/>
            <person name="Tanase T.-O."/>
            <person name="Nomura Y."/>
            <person name="Togiya S."/>
            <person name="Komai F."/>
            <person name="Hara R."/>
            <person name="Takeuchi K."/>
            <person name="Arita M."/>
            <person name="Imose N."/>
            <person name="Musashino K."/>
            <person name="Yuuki H."/>
            <person name="Oshima A."/>
            <person name="Sasaki N."/>
            <person name="Aotsuka S."/>
            <person name="Yoshikawa Y."/>
            <person name="Matsunawa H."/>
            <person name="Ichihara T."/>
            <person name="Shiohata N."/>
            <person name="Sano S."/>
            <person name="Moriya S."/>
            <person name="Momiyama H."/>
            <person name="Satoh N."/>
            <person name="Takami S."/>
            <person name="Terashima Y."/>
            <person name="Suzuki O."/>
            <person name="Nakagawa S."/>
            <person name="Senoh A."/>
            <person name="Mizoguchi H."/>
            <person name="Goto Y."/>
            <person name="Shimizu F."/>
            <person name="Wakebe H."/>
            <person name="Hishigaki H."/>
            <person name="Watanabe T."/>
            <person name="Sugiyama A."/>
            <person name="Takemoto M."/>
            <person name="Kawakami B."/>
            <person name="Yamazaki M."/>
            <person name="Watanabe K."/>
            <person name="Kumagai A."/>
            <person name="Itakura S."/>
            <person name="Fukuzumi Y."/>
            <person name="Fujimori Y."/>
            <person name="Komiyama M."/>
            <person name="Tashiro H."/>
            <person name="Tanigami A."/>
            <person name="Fujiwara T."/>
            <person name="Ono T."/>
            <person name="Yamada K."/>
            <person name="Fujii Y."/>
            <person name="Ozaki K."/>
            <person name="Hirao M."/>
            <person name="Ohmori Y."/>
            <person name="Kawabata A."/>
            <person name="Hikiji T."/>
            <person name="Kobatake N."/>
            <person name="Inagaki H."/>
            <person name="Ikema Y."/>
            <person name="Okamoto S."/>
            <person name="Okitani R."/>
            <person name="Kawakami T."/>
            <person name="Noguchi S."/>
            <person name="Itoh T."/>
            <person name="Shigeta K."/>
            <person name="Senba T."/>
            <person name="Matsumura K."/>
            <person name="Nakajima Y."/>
            <person name="Mizuno T."/>
            <person name="Morinaga M."/>
            <person name="Sasaki M."/>
            <person name="Togashi T."/>
            <person name="Oyama M."/>
            <person name="Hata H."/>
            <person name="Watanabe M."/>
            <person name="Komatsu T."/>
            <person name="Mizushima-Sugano J."/>
            <person name="Satoh T."/>
            <person name="Shirai Y."/>
            <person name="Takahashi Y."/>
            <person name="Nakagawa K."/>
            <person name="Okumura K."/>
            <person name="Nagase T."/>
            <person name="Nomura N."/>
            <person name="Kikuchi H."/>
            <person name="Masuho Y."/>
            <person name="Yamashita R."/>
            <person name="Nakai K."/>
            <person name="Yada T."/>
            <person name="Nakamura Y."/>
            <person name="Ohara O."/>
            <person name="Isogai T."/>
            <person name="Sugano S."/>
        </authorList>
    </citation>
    <scope>NUCLEOTIDE SEQUENCE [LARGE SCALE MRNA] (ISOFORMS SHORT; 3; 4 AND 5)</scope>
    <source>
        <tissue>Brain</tissue>
        <tissue>Cerebellum</tissue>
        <tissue>Lung</tissue>
        <tissue>Prostate</tissue>
    </source>
</reference>
<reference key="6">
    <citation type="journal article" date="2006" name="Nature">
        <title>The DNA sequence, annotation and analysis of human chromosome 3.</title>
        <authorList>
            <person name="Muzny D.M."/>
            <person name="Scherer S.E."/>
            <person name="Kaul R."/>
            <person name="Wang J."/>
            <person name="Yu J."/>
            <person name="Sudbrak R."/>
            <person name="Buhay C.J."/>
            <person name="Chen R."/>
            <person name="Cree A."/>
            <person name="Ding Y."/>
            <person name="Dugan-Rocha S."/>
            <person name="Gill R."/>
            <person name="Gunaratne P."/>
            <person name="Harris R.A."/>
            <person name="Hawes A.C."/>
            <person name="Hernandez J."/>
            <person name="Hodgson A.V."/>
            <person name="Hume J."/>
            <person name="Jackson A."/>
            <person name="Khan Z.M."/>
            <person name="Kovar-Smith C."/>
            <person name="Lewis L.R."/>
            <person name="Lozado R.J."/>
            <person name="Metzker M.L."/>
            <person name="Milosavljevic A."/>
            <person name="Miner G.R."/>
            <person name="Morgan M.B."/>
            <person name="Nazareth L.V."/>
            <person name="Scott G."/>
            <person name="Sodergren E."/>
            <person name="Song X.-Z."/>
            <person name="Steffen D."/>
            <person name="Wei S."/>
            <person name="Wheeler D.A."/>
            <person name="Wright M.W."/>
            <person name="Worley K.C."/>
            <person name="Yuan Y."/>
            <person name="Zhang Z."/>
            <person name="Adams C.Q."/>
            <person name="Ansari-Lari M.A."/>
            <person name="Ayele M."/>
            <person name="Brown M.J."/>
            <person name="Chen G."/>
            <person name="Chen Z."/>
            <person name="Clendenning J."/>
            <person name="Clerc-Blankenburg K.P."/>
            <person name="Chen R."/>
            <person name="Chen Z."/>
            <person name="Davis C."/>
            <person name="Delgado O."/>
            <person name="Dinh H.H."/>
            <person name="Dong W."/>
            <person name="Draper H."/>
            <person name="Ernst S."/>
            <person name="Fu G."/>
            <person name="Gonzalez-Garay M.L."/>
            <person name="Garcia D.K."/>
            <person name="Gillett W."/>
            <person name="Gu J."/>
            <person name="Hao B."/>
            <person name="Haugen E."/>
            <person name="Havlak P."/>
            <person name="He X."/>
            <person name="Hennig S."/>
            <person name="Hu S."/>
            <person name="Huang W."/>
            <person name="Jackson L.R."/>
            <person name="Jacob L.S."/>
            <person name="Kelly S.H."/>
            <person name="Kube M."/>
            <person name="Levy R."/>
            <person name="Li Z."/>
            <person name="Liu B."/>
            <person name="Liu J."/>
            <person name="Liu W."/>
            <person name="Lu J."/>
            <person name="Maheshwari M."/>
            <person name="Nguyen B.-V."/>
            <person name="Okwuonu G.O."/>
            <person name="Palmeiri A."/>
            <person name="Pasternak S."/>
            <person name="Perez L.M."/>
            <person name="Phelps K.A."/>
            <person name="Plopper F.J."/>
            <person name="Qiang B."/>
            <person name="Raymond C."/>
            <person name="Rodriguez R."/>
            <person name="Saenphimmachak C."/>
            <person name="Santibanez J."/>
            <person name="Shen H."/>
            <person name="Shen Y."/>
            <person name="Subramanian S."/>
            <person name="Tabor P.E."/>
            <person name="Verduzco D."/>
            <person name="Waldron L."/>
            <person name="Wang J."/>
            <person name="Wang J."/>
            <person name="Wang Q."/>
            <person name="Williams G.A."/>
            <person name="Wong G.K.-S."/>
            <person name="Yao Z."/>
            <person name="Zhang J."/>
            <person name="Zhang X."/>
            <person name="Zhao G."/>
            <person name="Zhou J."/>
            <person name="Zhou Y."/>
            <person name="Nelson D."/>
            <person name="Lehrach H."/>
            <person name="Reinhardt R."/>
            <person name="Naylor S.L."/>
            <person name="Yang H."/>
            <person name="Olson M."/>
            <person name="Weinstock G."/>
            <person name="Gibbs R.A."/>
        </authorList>
    </citation>
    <scope>NUCLEOTIDE SEQUENCE [LARGE SCALE GENOMIC DNA]</scope>
</reference>
<reference key="7">
    <citation type="submission" date="2005-07" db="EMBL/GenBank/DDBJ databases">
        <authorList>
            <person name="Mural R.J."/>
            <person name="Istrail S."/>
            <person name="Sutton G.G."/>
            <person name="Florea L."/>
            <person name="Halpern A.L."/>
            <person name="Mobarry C.M."/>
            <person name="Lippert R."/>
            <person name="Walenz B."/>
            <person name="Shatkay H."/>
            <person name="Dew I."/>
            <person name="Miller J.R."/>
            <person name="Flanigan M.J."/>
            <person name="Edwards N.J."/>
            <person name="Bolanos R."/>
            <person name="Fasulo D."/>
            <person name="Halldorsson B.V."/>
            <person name="Hannenhalli S."/>
            <person name="Turner R."/>
            <person name="Yooseph S."/>
            <person name="Lu F."/>
            <person name="Nusskern D.R."/>
            <person name="Shue B.C."/>
            <person name="Zheng X.H."/>
            <person name="Zhong F."/>
            <person name="Delcher A.L."/>
            <person name="Huson D.H."/>
            <person name="Kravitz S.A."/>
            <person name="Mouchard L."/>
            <person name="Reinert K."/>
            <person name="Remington K.A."/>
            <person name="Clark A.G."/>
            <person name="Waterman M.S."/>
            <person name="Eichler E.E."/>
            <person name="Adams M.D."/>
            <person name="Hunkapiller M.W."/>
            <person name="Myers E.W."/>
            <person name="Venter J.C."/>
        </authorList>
    </citation>
    <scope>NUCLEOTIDE SEQUENCE [LARGE SCALE GENOMIC DNA]</scope>
</reference>
<reference key="8">
    <citation type="journal article" date="2004" name="Genome Res.">
        <title>The status, quality, and expansion of the NIH full-length cDNA project: the Mammalian Gene Collection (MGC).</title>
        <authorList>
            <consortium name="The MGC Project Team"/>
        </authorList>
    </citation>
    <scope>NUCLEOTIDE SEQUENCE [LARGE SCALE MRNA] (ISOFORM SHORT)</scope>
    <scope>VARIANT MET-341</scope>
</reference>
<reference key="9">
    <citation type="journal article" date="1994" name="Cell. Signal.">
        <title>Molecular cloning and functional characterization of a human liver vasoactive intestinal peptide receptor.</title>
        <authorList>
            <person name="Gagnon A.W."/>
            <person name="Aiyar N."/>
            <person name="Elshourbagy N.A."/>
        </authorList>
    </citation>
    <scope>NUCLEOTIDE SEQUENCE [MRNA] OF 33-457</scope>
    <source>
        <tissue>Liver</tissue>
    </source>
</reference>
<reference key="10">
    <citation type="journal article" date="1995" name="Biochem. Biophys. Res. Commun.">
        <title>Highly conserved aspartate 68, tryptophan 73 and glycine 109 in the N-terminal extracellular domain of the human VIP receptor are essential for its ability to bind VIP.</title>
        <authorList>
            <person name="Couvineau A."/>
            <person name="Gaudin P."/>
            <person name="Maoret J.J."/>
            <person name="Rouyer-Fessard C."/>
            <person name="Nicole P."/>
            <person name="Laburthe M."/>
        </authorList>
    </citation>
    <scope>INTERACTION WITH VIP</scope>
</reference>
<reference key="11">
    <citation type="journal article" date="1996" name="J. Clin. Immunol.">
        <title>Predominant expression of type II vasoactive intestinal peptide receptors by human T lymphoblastoma cells: transduction of both Ca2+ and cyclic AMP signals.</title>
        <authorList>
            <person name="Xia M."/>
            <person name="Sreedharan S.P."/>
            <person name="Goetzl E.J."/>
        </authorList>
    </citation>
    <scope>TISSUE SPECIFICITY</scope>
</reference>
<reference key="12">
    <citation type="journal article" date="1998" name="Ann. N. Y. Acad. Sci.">
        <title>Importance of conserved cysteines in the extracellular loops of human PACAP/VIP1 receptor for ligand binding and stimulation of cAMP production.</title>
        <authorList>
            <person name="Knudsen S.M."/>
            <person name="Tams J.W."/>
            <person name="Wulff B.S."/>
            <person name="Fahrenkrug J."/>
        </authorList>
    </citation>
    <scope>DISULFIDE BOND</scope>
</reference>
<reference key="13">
    <citation type="journal article" date="2022" name="Nat. Commun.">
        <title>A distinctive ligand recognition mechanism by the human vasoactive intestinal polypeptide receptor 2.</title>
        <authorList>
            <person name="Xu Y."/>
            <person name="Feng W."/>
            <person name="Zhou Q."/>
            <person name="Liang A."/>
            <person name="Li J."/>
            <person name="Dai A."/>
            <person name="Zhao F."/>
            <person name="Yan J."/>
            <person name="Chen C.W."/>
            <person name="Li H."/>
            <person name="Zhao L.H."/>
            <person name="Xia T."/>
            <person name="Jiang Y."/>
            <person name="Xu H.E."/>
            <person name="Yang D."/>
            <person name="Wang M.W."/>
        </authorList>
    </citation>
    <scope>FUNCTION</scope>
    <scope>MUTAGENESIS OF TYR-139</scope>
</reference>
<reference key="14">
    <citation type="journal article" date="2004" name="J. Exp. Med.">
        <title>Dual, HLA-B27 subtype-dependent conformation of a self-peptide.</title>
        <authorList>
            <person name="Hulsmeyer M."/>
            <person name="Fiorillo M.T."/>
            <person name="Bettosini F."/>
            <person name="Sorrentino R."/>
            <person name="Saenger W."/>
            <person name="Ziegler A."/>
            <person name="Uchanska-Ziegler B."/>
        </authorList>
    </citation>
    <scope>X-RAY CRYSTALLOGRAPHY (1.47 ANGSTROMS) OF 400-408 IN COMPLEX WITH MHC</scope>
</reference>
<reference key="15">
    <citation type="journal article" date="2008" name="J. Biol. Chem.">
        <title>Citrullination-dependent differential presentation of a self-peptide by HLA-B27 subtypes.</title>
        <authorList>
            <person name="Beltrami A."/>
            <person name="Rossmann M."/>
            <person name="Fiorillo M.T."/>
            <person name="Paladini F."/>
            <person name="Sorrentino R."/>
            <person name="Saenger W."/>
            <person name="Kumar P."/>
            <person name="Ziegler A."/>
            <person name="Uchanska-Ziegler B."/>
        </authorList>
    </citation>
    <scope>X-RAY CRYSTALLOGRAPHY (1.86 ANGSTROMS) OF 400-408 IN COMPLEX WITH MHC</scope>
</reference>
<reference evidence="14 15" key="16">
    <citation type="journal article" date="2022" name="Nat. Commun.">
        <title>Understanding VPAC receptor family peptide binding and selectivity.</title>
        <authorList>
            <person name="Piper S.J."/>
            <person name="Deganutti G."/>
            <person name="Lu J."/>
            <person name="Zhao P."/>
            <person name="Liang Y.L."/>
            <person name="Lu Y."/>
            <person name="Fletcher M.M."/>
            <person name="Hossain M.A."/>
            <person name="Christopoulos A."/>
            <person name="Reynolds C.A."/>
            <person name="Danev R."/>
            <person name="Sexton P.M."/>
            <person name="Wootten D."/>
        </authorList>
    </citation>
    <scope>STRUCTURE BY ELECTRON MICROSCOPY (2.7 ANGSTROMS) OF 28-457 IN COMPLEX WITH ADCYAP1; VIP AND G PROTEINS</scope>
    <scope>DISULFIDE BOND</scope>
    <scope>INTERACTION WITH ADCYAP1 AND VIP</scope>
    <scope>FUNCTION</scope>
    <scope>SUBCELLULAR LOCATION</scope>
</reference>
<dbReference type="EMBL" id="L13288">
    <property type="protein sequence ID" value="AAA36805.1"/>
    <property type="molecule type" value="mRNA"/>
</dbReference>
<dbReference type="EMBL" id="U11087">
    <property type="protein sequence ID" value="AAB60362.1"/>
    <property type="molecule type" value="Genomic_DNA"/>
</dbReference>
<dbReference type="EMBL" id="U11079">
    <property type="protein sequence ID" value="AAB60362.1"/>
    <property type="status" value="JOINED"/>
    <property type="molecule type" value="Genomic_DNA"/>
</dbReference>
<dbReference type="EMBL" id="U11080">
    <property type="protein sequence ID" value="AAB60362.1"/>
    <property type="status" value="JOINED"/>
    <property type="molecule type" value="Genomic_DNA"/>
</dbReference>
<dbReference type="EMBL" id="U11081">
    <property type="protein sequence ID" value="AAB60362.1"/>
    <property type="status" value="JOINED"/>
    <property type="molecule type" value="Genomic_DNA"/>
</dbReference>
<dbReference type="EMBL" id="U11083">
    <property type="protein sequence ID" value="AAB60362.1"/>
    <property type="status" value="JOINED"/>
    <property type="molecule type" value="Genomic_DNA"/>
</dbReference>
<dbReference type="EMBL" id="U11084">
    <property type="protein sequence ID" value="AAB60362.1"/>
    <property type="status" value="JOINED"/>
    <property type="molecule type" value="Genomic_DNA"/>
</dbReference>
<dbReference type="EMBL" id="U11085">
    <property type="protein sequence ID" value="AAB60362.1"/>
    <property type="status" value="JOINED"/>
    <property type="molecule type" value="Genomic_DNA"/>
</dbReference>
<dbReference type="EMBL" id="U11086">
    <property type="protein sequence ID" value="AAB60362.1"/>
    <property type="status" value="JOINED"/>
    <property type="molecule type" value="Genomic_DNA"/>
</dbReference>
<dbReference type="EMBL" id="X75299">
    <property type="protein sequence ID" value="CAA53046.1"/>
    <property type="molecule type" value="mRNA"/>
</dbReference>
<dbReference type="EMBL" id="X77777">
    <property type="protein sequence ID" value="CAA54814.1"/>
    <property type="molecule type" value="mRNA"/>
</dbReference>
<dbReference type="EMBL" id="AB065669">
    <property type="protein sequence ID" value="BAC05895.1"/>
    <property type="molecule type" value="Genomic_DNA"/>
</dbReference>
<dbReference type="EMBL" id="EF577396">
    <property type="protein sequence ID" value="ABQ52416.1"/>
    <property type="molecule type" value="mRNA"/>
</dbReference>
<dbReference type="EMBL" id="AK314334">
    <property type="protein sequence ID" value="BAG36980.1"/>
    <property type="molecule type" value="mRNA"/>
</dbReference>
<dbReference type="EMBL" id="AK293548">
    <property type="protein sequence ID" value="BAG57026.1"/>
    <property type="molecule type" value="mRNA"/>
</dbReference>
<dbReference type="EMBL" id="AK294609">
    <property type="protein sequence ID" value="BAG57795.1"/>
    <property type="molecule type" value="mRNA"/>
</dbReference>
<dbReference type="EMBL" id="AK056819">
    <property type="protein sequence ID" value="BAG51813.1"/>
    <property type="molecule type" value="mRNA"/>
</dbReference>
<dbReference type="EMBL" id="AC092047">
    <property type="status" value="NOT_ANNOTATED_CDS"/>
    <property type="molecule type" value="Genomic_DNA"/>
</dbReference>
<dbReference type="EMBL" id="CH471055">
    <property type="protein sequence ID" value="EAW64649.1"/>
    <property type="molecule type" value="Genomic_DNA"/>
</dbReference>
<dbReference type="EMBL" id="CH471055">
    <property type="protein sequence ID" value="EAW64650.1"/>
    <property type="molecule type" value="Genomic_DNA"/>
</dbReference>
<dbReference type="EMBL" id="BC064424">
    <property type="protein sequence ID" value="AAH64424.1"/>
    <property type="molecule type" value="mRNA"/>
</dbReference>
<dbReference type="EMBL" id="L20295">
    <property type="protein sequence ID" value="AAA36802.1"/>
    <property type="molecule type" value="mRNA"/>
</dbReference>
<dbReference type="CCDS" id="CCDS2698.1">
    <molecule id="P32241-1"/>
</dbReference>
<dbReference type="CCDS" id="CCDS58827.1">
    <molecule id="P32241-4"/>
</dbReference>
<dbReference type="CCDS" id="CCDS58828.1">
    <molecule id="P32241-5"/>
</dbReference>
<dbReference type="CCDS" id="CCDS58829.1">
    <molecule id="P32241-3"/>
</dbReference>
<dbReference type="PIR" id="JC2194">
    <property type="entry name" value="JC2194"/>
</dbReference>
<dbReference type="PIR" id="JC2195">
    <property type="entry name" value="JC2195"/>
</dbReference>
<dbReference type="RefSeq" id="NP_001238811.1">
    <molecule id="P32241-5"/>
    <property type="nucleotide sequence ID" value="NM_001251882.2"/>
</dbReference>
<dbReference type="RefSeq" id="NP_001238812.1">
    <molecule id="P32241-3"/>
    <property type="nucleotide sequence ID" value="NM_001251883.2"/>
</dbReference>
<dbReference type="RefSeq" id="NP_001238813.1">
    <molecule id="P32241-4"/>
    <property type="nucleotide sequence ID" value="NM_001251884.2"/>
</dbReference>
<dbReference type="RefSeq" id="NP_001238814.1">
    <property type="nucleotide sequence ID" value="NM_001251885.1"/>
</dbReference>
<dbReference type="RefSeq" id="NP_004615.2">
    <molecule id="P32241-1"/>
    <property type="nucleotide sequence ID" value="NM_004624.3"/>
</dbReference>
<dbReference type="RefSeq" id="XP_005265495.1">
    <property type="nucleotide sequence ID" value="XM_005265438.3"/>
</dbReference>
<dbReference type="RefSeq" id="XP_011532381.1">
    <property type="nucleotide sequence ID" value="XM_011534079.1"/>
</dbReference>
<dbReference type="PDB" id="1OF2">
    <property type="method" value="X-ray"/>
    <property type="resolution" value="2.20 A"/>
    <property type="chains" value="C=400-408"/>
</dbReference>
<dbReference type="PDB" id="1OGT">
    <property type="method" value="X-ray"/>
    <property type="resolution" value="1.47 A"/>
    <property type="chains" value="C=400-408"/>
</dbReference>
<dbReference type="PDB" id="3B3I">
    <property type="method" value="X-ray"/>
    <property type="resolution" value="1.86 A"/>
    <property type="chains" value="C=400-408"/>
</dbReference>
<dbReference type="PDB" id="3B6S">
    <property type="method" value="X-ray"/>
    <property type="resolution" value="1.80 A"/>
    <property type="chains" value="C=400-408"/>
</dbReference>
<dbReference type="PDB" id="3DTX">
    <property type="method" value="X-ray"/>
    <property type="resolution" value="2.10 A"/>
    <property type="chains" value="C=400-408"/>
</dbReference>
<dbReference type="PDB" id="3HCV">
    <property type="method" value="X-ray"/>
    <property type="resolution" value="1.95 A"/>
    <property type="chains" value="C=400-408"/>
</dbReference>
<dbReference type="PDB" id="5DEF">
    <property type="method" value="X-ray"/>
    <property type="resolution" value="1.60 A"/>
    <property type="chains" value="C=400-408"/>
</dbReference>
<dbReference type="PDB" id="5DEG">
    <property type="method" value="X-ray"/>
    <property type="resolution" value="1.83 A"/>
    <property type="chains" value="C=400-408"/>
</dbReference>
<dbReference type="PDB" id="5IB1">
    <property type="method" value="X-ray"/>
    <property type="resolution" value="1.91 A"/>
    <property type="chains" value="C=400-408"/>
</dbReference>
<dbReference type="PDB" id="5IB2">
    <property type="method" value="X-ray"/>
    <property type="resolution" value="1.44 A"/>
    <property type="chains" value="C=400-408"/>
</dbReference>
<dbReference type="PDB" id="5IB3">
    <property type="method" value="X-ray"/>
    <property type="resolution" value="1.91 A"/>
    <property type="chains" value="C=400-408"/>
</dbReference>
<dbReference type="PDB" id="5IB4">
    <property type="method" value="X-ray"/>
    <property type="resolution" value="1.95 A"/>
    <property type="chains" value="C=400-408"/>
</dbReference>
<dbReference type="PDB" id="5IB5">
    <property type="method" value="X-ray"/>
    <property type="resolution" value="2.49 A"/>
    <property type="chains" value="C/F=400-408"/>
</dbReference>
<dbReference type="PDB" id="6VN7">
    <property type="method" value="EM"/>
    <property type="resolution" value="3.20 A"/>
    <property type="chains" value="R=31-437"/>
</dbReference>
<dbReference type="PDB" id="7ALO">
    <property type="method" value="X-ray"/>
    <property type="resolution" value="1.80 A"/>
    <property type="chains" value="C/F=400-408"/>
</dbReference>
<dbReference type="PDB" id="8E3Y">
    <property type="method" value="EM"/>
    <property type="resolution" value="2.30 A"/>
    <property type="chains" value="R=28-457"/>
</dbReference>
<dbReference type="PDB" id="8E3Z">
    <property type="method" value="EM"/>
    <property type="resolution" value="2.70 A"/>
    <property type="chains" value="R=28-457"/>
</dbReference>
<dbReference type="PDBsum" id="1OF2"/>
<dbReference type="PDBsum" id="1OGT"/>
<dbReference type="PDBsum" id="3B3I"/>
<dbReference type="PDBsum" id="3B6S"/>
<dbReference type="PDBsum" id="3DTX"/>
<dbReference type="PDBsum" id="3HCV"/>
<dbReference type="PDBsum" id="5DEF"/>
<dbReference type="PDBsum" id="5DEG"/>
<dbReference type="PDBsum" id="5IB1"/>
<dbReference type="PDBsum" id="5IB2"/>
<dbReference type="PDBsum" id="5IB3"/>
<dbReference type="PDBsum" id="5IB4"/>
<dbReference type="PDBsum" id="5IB5"/>
<dbReference type="PDBsum" id="6VN7"/>
<dbReference type="PDBsum" id="7ALO"/>
<dbReference type="PDBsum" id="8E3Y"/>
<dbReference type="PDBsum" id="8E3Z"/>
<dbReference type="EMDB" id="EMD-21249"/>
<dbReference type="EMDB" id="EMD-27873"/>
<dbReference type="EMDB" id="EMD-27874"/>
<dbReference type="SMR" id="P32241"/>
<dbReference type="BioGRID" id="113274">
    <property type="interactions" value="245"/>
</dbReference>
<dbReference type="CORUM" id="P32241"/>
<dbReference type="FunCoup" id="P32241">
    <property type="interactions" value="466"/>
</dbReference>
<dbReference type="IntAct" id="P32241">
    <property type="interactions" value="187"/>
</dbReference>
<dbReference type="MINT" id="P32241"/>
<dbReference type="STRING" id="9606.ENSP00000327246"/>
<dbReference type="BindingDB" id="P32241"/>
<dbReference type="ChEMBL" id="CHEMBL5144"/>
<dbReference type="DrugBank" id="DB18634">
    <property type="generic name" value="Vasoactive intestinal peptide"/>
</dbReference>
<dbReference type="DrugCentral" id="P32241"/>
<dbReference type="GuidetoPHARMACOLOGY" id="371"/>
<dbReference type="TCDB" id="9.A.14.4.9">
    <property type="family name" value="the g-protein-coupled receptor (gpcr) family"/>
</dbReference>
<dbReference type="GlyCosmos" id="P32241">
    <property type="glycosylation" value="4 sites, No reported glycans"/>
</dbReference>
<dbReference type="GlyGen" id="P32241">
    <property type="glycosylation" value="4 sites, 2 N-linked glycans (2 sites)"/>
</dbReference>
<dbReference type="iPTMnet" id="P32241"/>
<dbReference type="PhosphoSitePlus" id="P32241"/>
<dbReference type="SwissPalm" id="P32241"/>
<dbReference type="BioMuta" id="VIPR1"/>
<dbReference type="DMDM" id="418253"/>
<dbReference type="jPOST" id="P32241"/>
<dbReference type="MassIVE" id="P32241"/>
<dbReference type="PaxDb" id="9606-ENSP00000327246"/>
<dbReference type="PeptideAtlas" id="P32241"/>
<dbReference type="ProteomicsDB" id="25640"/>
<dbReference type="ProteomicsDB" id="32204"/>
<dbReference type="ProteomicsDB" id="3938"/>
<dbReference type="ProteomicsDB" id="54848">
    <molecule id="P32241-1"/>
</dbReference>
<dbReference type="ProteomicsDB" id="54849">
    <molecule id="P32241-2"/>
</dbReference>
<dbReference type="ABCD" id="P32241">
    <property type="antibodies" value="2 sequenced antibodies"/>
</dbReference>
<dbReference type="Antibodypedia" id="12331">
    <property type="antibodies" value="445 antibodies from 35 providers"/>
</dbReference>
<dbReference type="DNASU" id="7433"/>
<dbReference type="Ensembl" id="ENST00000325123.5">
    <molecule id="P32241-1"/>
    <property type="protein sequence ID" value="ENSP00000327246.4"/>
    <property type="gene ID" value="ENSG00000114812.13"/>
</dbReference>
<dbReference type="Ensembl" id="ENST00000433647.5">
    <molecule id="P32241-5"/>
    <property type="protein sequence ID" value="ENSP00000394950.1"/>
    <property type="gene ID" value="ENSG00000114812.13"/>
</dbReference>
<dbReference type="Ensembl" id="ENST00000438259.6">
    <molecule id="P32241-3"/>
    <property type="protein sequence ID" value="ENSP00000415371.2"/>
    <property type="gene ID" value="ENSG00000114812.13"/>
</dbReference>
<dbReference type="Ensembl" id="ENST00000543411.5">
    <molecule id="P32241-4"/>
    <property type="protein sequence ID" value="ENSP00000445701.1"/>
    <property type="gene ID" value="ENSG00000114812.13"/>
</dbReference>
<dbReference type="GeneID" id="7433"/>
<dbReference type="KEGG" id="hsa:7433"/>
<dbReference type="MANE-Select" id="ENST00000325123.5">
    <property type="protein sequence ID" value="ENSP00000327246.4"/>
    <property type="RefSeq nucleotide sequence ID" value="NM_004624.4"/>
    <property type="RefSeq protein sequence ID" value="NP_004615.2"/>
</dbReference>
<dbReference type="UCSC" id="uc003clf.3">
    <molecule id="P32241-1"/>
    <property type="organism name" value="human"/>
</dbReference>
<dbReference type="AGR" id="HGNC:12694"/>
<dbReference type="CTD" id="7433"/>
<dbReference type="DisGeNET" id="7433"/>
<dbReference type="GeneCards" id="VIPR1"/>
<dbReference type="HGNC" id="HGNC:12694">
    <property type="gene designation" value="VIPR1"/>
</dbReference>
<dbReference type="HPA" id="ENSG00000114812">
    <property type="expression patterns" value="Tissue enhanced (lung)"/>
</dbReference>
<dbReference type="MIM" id="192321">
    <property type="type" value="gene"/>
</dbReference>
<dbReference type="neXtProt" id="NX_P32241"/>
<dbReference type="OpenTargets" id="ENSG00000114812"/>
<dbReference type="PharmGKB" id="PA37313"/>
<dbReference type="VEuPathDB" id="HostDB:ENSG00000114812"/>
<dbReference type="eggNOG" id="KOG4564">
    <property type="taxonomic scope" value="Eukaryota"/>
</dbReference>
<dbReference type="GeneTree" id="ENSGT00940000156402"/>
<dbReference type="HOGENOM" id="CLU_1124194_0_0_1"/>
<dbReference type="InParanoid" id="P32241"/>
<dbReference type="OMA" id="SKSQHPW"/>
<dbReference type="OrthoDB" id="5967113at2759"/>
<dbReference type="PAN-GO" id="P32241">
    <property type="GO annotations" value="5 GO annotations based on evolutionary models"/>
</dbReference>
<dbReference type="PhylomeDB" id="P32241"/>
<dbReference type="TreeFam" id="TF315710"/>
<dbReference type="PathwayCommons" id="P32241"/>
<dbReference type="Reactome" id="R-HSA-418555">
    <property type="pathway name" value="G alpha (s) signalling events"/>
</dbReference>
<dbReference type="Reactome" id="R-HSA-420092">
    <property type="pathway name" value="Glucagon-type ligand receptors"/>
</dbReference>
<dbReference type="SignaLink" id="P32241"/>
<dbReference type="SIGNOR" id="P32241"/>
<dbReference type="BioGRID-ORCS" id="7433">
    <property type="hits" value="10 hits in 1147 CRISPR screens"/>
</dbReference>
<dbReference type="ChiTaRS" id="VIPR1">
    <property type="organism name" value="human"/>
</dbReference>
<dbReference type="EvolutionaryTrace" id="P32241"/>
<dbReference type="GeneWiki" id="VIPR1"/>
<dbReference type="GenomeRNAi" id="7433"/>
<dbReference type="Pharos" id="P32241">
    <property type="development level" value="Tchem"/>
</dbReference>
<dbReference type="PRO" id="PR:P32241"/>
<dbReference type="Proteomes" id="UP000005640">
    <property type="component" value="Chromosome 3"/>
</dbReference>
<dbReference type="RNAct" id="P32241">
    <property type="molecule type" value="protein"/>
</dbReference>
<dbReference type="Bgee" id="ENSG00000114812">
    <property type="expression patterns" value="Expressed in right lung and 142 other cell types or tissues"/>
</dbReference>
<dbReference type="ExpressionAtlas" id="P32241">
    <property type="expression patterns" value="baseline and differential"/>
</dbReference>
<dbReference type="GO" id="GO:0005886">
    <property type="term" value="C:plasma membrane"/>
    <property type="evidence" value="ECO:0000314"/>
    <property type="project" value="UniProt"/>
</dbReference>
<dbReference type="GO" id="GO:0043235">
    <property type="term" value="C:receptor complex"/>
    <property type="evidence" value="ECO:0000314"/>
    <property type="project" value="MGI"/>
</dbReference>
<dbReference type="GO" id="GO:0008528">
    <property type="term" value="F:G protein-coupled peptide receptor activity"/>
    <property type="evidence" value="ECO:0000318"/>
    <property type="project" value="GO_Central"/>
</dbReference>
<dbReference type="GO" id="GO:0017046">
    <property type="term" value="F:peptide hormone binding"/>
    <property type="evidence" value="ECO:0000353"/>
    <property type="project" value="GO_Central"/>
</dbReference>
<dbReference type="GO" id="GO:0001634">
    <property type="term" value="F:pituitary adenylate cyclase-activating polypeptide receptor activity"/>
    <property type="evidence" value="ECO:0000314"/>
    <property type="project" value="UniProt"/>
</dbReference>
<dbReference type="GO" id="GO:0004999">
    <property type="term" value="F:vasoactive intestinal polypeptide receptor activity"/>
    <property type="evidence" value="ECO:0000314"/>
    <property type="project" value="UniProtKB"/>
</dbReference>
<dbReference type="GO" id="GO:0007189">
    <property type="term" value="P:adenylate cyclase-activating G protein-coupled receptor signaling pathway"/>
    <property type="evidence" value="ECO:0000314"/>
    <property type="project" value="UniProtKB"/>
</dbReference>
<dbReference type="GO" id="GO:0007188">
    <property type="term" value="P:adenylate cyclase-modulating G protein-coupled receptor signaling pathway"/>
    <property type="evidence" value="ECO:0000318"/>
    <property type="project" value="GO_Central"/>
</dbReference>
<dbReference type="GO" id="GO:0007166">
    <property type="term" value="P:cell surface receptor signaling pathway"/>
    <property type="evidence" value="ECO:0007669"/>
    <property type="project" value="InterPro"/>
</dbReference>
<dbReference type="GO" id="GO:0007186">
    <property type="term" value="P:G protein-coupled receptor signaling pathway"/>
    <property type="evidence" value="ECO:0000304"/>
    <property type="project" value="ProtInc"/>
</dbReference>
<dbReference type="GO" id="GO:0007187">
    <property type="term" value="P:G protein-coupled receptor signaling pathway, coupled to cyclic nucleotide second messenger"/>
    <property type="evidence" value="ECO:0000314"/>
    <property type="project" value="GO_Central"/>
</dbReference>
<dbReference type="GO" id="GO:0008284">
    <property type="term" value="P:positive regulation of cell population proliferation"/>
    <property type="evidence" value="ECO:0000304"/>
    <property type="project" value="ProtInc"/>
</dbReference>
<dbReference type="FunFam" id="4.10.1240.10:FF:000016">
    <property type="entry name" value="Vasoactive intestinal peptide receptor 1"/>
    <property type="match status" value="1"/>
</dbReference>
<dbReference type="FunFam" id="1.20.1070.10:FF:000032">
    <property type="entry name" value="Vasoactive intestinal polypeptide receptor 1"/>
    <property type="match status" value="1"/>
</dbReference>
<dbReference type="Gene3D" id="4.10.1240.10">
    <property type="entry name" value="GPCR, family 2, extracellular hormone receptor domain"/>
    <property type="match status" value="1"/>
</dbReference>
<dbReference type="Gene3D" id="1.20.1070.10">
    <property type="entry name" value="Rhodopsin 7-helix transmembrane proteins"/>
    <property type="match status" value="1"/>
</dbReference>
<dbReference type="InterPro" id="IPR050332">
    <property type="entry name" value="GPCR_2"/>
</dbReference>
<dbReference type="InterPro" id="IPR017981">
    <property type="entry name" value="GPCR_2-like_7TM"/>
</dbReference>
<dbReference type="InterPro" id="IPR036445">
    <property type="entry name" value="GPCR_2_extracell_dom_sf"/>
</dbReference>
<dbReference type="InterPro" id="IPR001879">
    <property type="entry name" value="GPCR_2_extracellular_dom"/>
</dbReference>
<dbReference type="InterPro" id="IPR000832">
    <property type="entry name" value="GPCR_2_secretin-like"/>
</dbReference>
<dbReference type="InterPro" id="IPR017983">
    <property type="entry name" value="GPCR_2_secretin-like_CS"/>
</dbReference>
<dbReference type="InterPro" id="IPR001571">
    <property type="entry name" value="GPCR_2_VIP_rcpt"/>
</dbReference>
<dbReference type="InterPro" id="IPR001771">
    <property type="entry name" value="GPCR_2_VIP_rcpt_1"/>
</dbReference>
<dbReference type="PANTHER" id="PTHR45620">
    <property type="entry name" value="PDF RECEPTOR-LIKE PROTEIN-RELATED"/>
    <property type="match status" value="1"/>
</dbReference>
<dbReference type="PANTHER" id="PTHR45620:SF24">
    <property type="entry name" value="VASOACTIVE INTESTINAL POLYPEPTIDE RECEPTOR 1"/>
    <property type="match status" value="1"/>
</dbReference>
<dbReference type="Pfam" id="PF00002">
    <property type="entry name" value="7tm_2"/>
    <property type="match status" value="1"/>
</dbReference>
<dbReference type="Pfam" id="PF02793">
    <property type="entry name" value="HRM"/>
    <property type="match status" value="1"/>
</dbReference>
<dbReference type="PRINTS" id="PR00249">
    <property type="entry name" value="GPCRSECRETIN"/>
</dbReference>
<dbReference type="PRINTS" id="PR00491">
    <property type="entry name" value="VASOACTVEIPR"/>
</dbReference>
<dbReference type="PRINTS" id="PR01154">
    <property type="entry name" value="VIP1RECEPTOR"/>
</dbReference>
<dbReference type="SMART" id="SM00008">
    <property type="entry name" value="HormR"/>
    <property type="match status" value="1"/>
</dbReference>
<dbReference type="SUPFAM" id="SSF81321">
    <property type="entry name" value="Family A G protein-coupled receptor-like"/>
    <property type="match status" value="1"/>
</dbReference>
<dbReference type="SUPFAM" id="SSF111418">
    <property type="entry name" value="Hormone receptor domain"/>
    <property type="match status" value="1"/>
</dbReference>
<dbReference type="PROSITE" id="PS00649">
    <property type="entry name" value="G_PROTEIN_RECEP_F2_1"/>
    <property type="match status" value="1"/>
</dbReference>
<dbReference type="PROSITE" id="PS00650">
    <property type="entry name" value="G_PROTEIN_RECEP_F2_2"/>
    <property type="match status" value="1"/>
</dbReference>
<dbReference type="PROSITE" id="PS50227">
    <property type="entry name" value="G_PROTEIN_RECEP_F2_3"/>
    <property type="match status" value="1"/>
</dbReference>
<dbReference type="PROSITE" id="PS50261">
    <property type="entry name" value="G_PROTEIN_RECEP_F2_4"/>
    <property type="match status" value="1"/>
</dbReference>
<comment type="function">
    <text evidence="4 5 6">G protein-coupled receptor activated by the neuropeptides vasoactive intestinal peptide (VIP) and pituitary adenylate cyclase-activating polypeptide (ADCYAP1/PACAP) (PubMed:35477937, PubMed:36385145, PubMed:8179610). Binds VIP and both PACAP27 and PACAP38 bioactive peptides with the following order of ligand affinity VIP = PACAP27 &gt; PACAP38 (PubMed:35477937, PubMed:8179610). Ligand binding causes a conformation change that triggers signaling via guanine nucleotide-binding proteins (G proteins) and modulates the activity of downstream effectors. Activates cAMP-dependent pathway (PubMed:35477937, PubMed:36385145, PubMed:8179610).</text>
</comment>
<comment type="subunit">
    <text evidence="5">Interacts with ADCYAP1/PACAP; activated by both PACAP27 and PACAP38 neuropeptides (PubMed:36385145). Interacts with VIP; the interaction results in VIPR1 activation (PubMed:36385145).</text>
</comment>
<comment type="interaction">
    <interactant intactId="EBI-3917984">
        <id>P32241</id>
    </interactant>
    <interactant intactId="EBI-12859340">
        <id>Q9NQX1-2</id>
        <label>PRDM5</label>
    </interactant>
    <organismsDiffer>false</organismsDiffer>
    <experiments>3</experiments>
</comment>
<comment type="interaction">
    <interactant intactId="EBI-3917984">
        <id>P32241</id>
    </interactant>
    <interactant intactId="EBI-6656819">
        <id>PRO_0000011460</id>
        <label>VIP</label>
        <dbReference type="UniProtKB" id="P01282"/>
    </interactant>
    <organismsDiffer>false</organismsDiffer>
    <experiments>2</experiments>
</comment>
<comment type="subcellular location">
    <subcellularLocation>
        <location evidence="6">Cell membrane</location>
        <topology evidence="5">Multi-pass membrane protein</topology>
    </subcellularLocation>
</comment>
<comment type="alternative products">
    <event type="alternative splicing"/>
    <isoform>
        <id>P32241-1</id>
        <name>Short</name>
        <name>hIVR8</name>
        <sequence type="displayed"/>
    </isoform>
    <isoform>
        <id>P32241-2</id>
        <name>Long</name>
        <name>hIVR5</name>
        <sequence type="described" ref="VSP_002010"/>
    </isoform>
    <isoform>
        <id>P32241-3</id>
        <name>3</name>
        <sequence type="described" ref="VSP_045143"/>
    </isoform>
    <isoform>
        <id>P32241-4</id>
        <name>4</name>
        <sequence type="described" ref="VSP_047271 VSP_047273"/>
    </isoform>
    <isoform>
        <id>P32241-5</id>
        <name>5</name>
        <sequence type="described" ref="VSP_047272"/>
    </isoform>
</comment>
<comment type="tissue specificity">
    <text evidence="7">In lung, HT-29 colonic epithelial cells, Raji B-lymphoblasts. Lesser extent in brain, heart, kidney, liver and placenta. Not expressed in CD4+ or CD8+ T-cells. Expressed in the T-cell lines HARRIS, HuT 78, Jurkat and SUP-T1, but not in the T-cell lines Peer, MOLT-4, HSB and YT.</text>
</comment>
<comment type="similarity">
    <text evidence="12">Belongs to the G-protein coupled receptor 2 family.</text>
</comment>
<feature type="signal peptide" evidence="2">
    <location>
        <begin position="1"/>
        <end position="30"/>
    </location>
</feature>
<feature type="chain" id="PRO_0000012855" description="Vasoactive intestinal polypeptide receptor 1">
    <location>
        <begin position="31"/>
        <end position="457"/>
    </location>
</feature>
<feature type="topological domain" description="Extracellular" evidence="12">
    <location>
        <begin position="31"/>
        <end position="141"/>
    </location>
</feature>
<feature type="transmembrane region" description="Helical; Name=1" evidence="5 15">
    <location>
        <begin position="142"/>
        <end position="166"/>
    </location>
</feature>
<feature type="topological domain" description="Cytoplasmic" evidence="12">
    <location>
        <begin position="167"/>
        <end position="174"/>
    </location>
</feature>
<feature type="transmembrane region" description="Helical; Name=2" evidence="5 15">
    <location>
        <begin position="175"/>
        <end position="196"/>
    </location>
</feature>
<feature type="topological domain" description="Extracellular" evidence="12">
    <location>
        <begin position="197"/>
        <end position="216"/>
    </location>
</feature>
<feature type="transmembrane region" description="Helical; Name=3" evidence="5 15">
    <location>
        <begin position="217"/>
        <end position="241"/>
    </location>
</feature>
<feature type="topological domain" description="Cytoplasmic" evidence="12">
    <location>
        <begin position="242"/>
        <end position="254"/>
    </location>
</feature>
<feature type="transmembrane region" description="Helical; Name=4" evidence="5 15">
    <location>
        <begin position="255"/>
        <end position="276"/>
    </location>
</feature>
<feature type="topological domain" description="Extracellular" evidence="12">
    <location>
        <begin position="277"/>
        <end position="291"/>
    </location>
</feature>
<feature type="transmembrane region" description="Helical; Name=5" evidence="5 15">
    <location>
        <begin position="292"/>
        <end position="316"/>
    </location>
</feature>
<feature type="topological domain" description="Cytoplasmic" evidence="12">
    <location>
        <begin position="317"/>
        <end position="338"/>
    </location>
</feature>
<feature type="transmembrane region" description="Helical; Name=6" evidence="5 15">
    <location>
        <begin position="339"/>
        <end position="359"/>
    </location>
</feature>
<feature type="topological domain" description="Extracellular" evidence="12">
    <location>
        <begin position="360"/>
        <end position="367"/>
    </location>
</feature>
<feature type="transmembrane region" description="Helical; Name=7" evidence="5 15">
    <location>
        <begin position="368"/>
        <end position="391"/>
    </location>
</feature>
<feature type="topological domain" description="Cytoplasmic" evidence="12">
    <location>
        <begin position="392"/>
        <end position="457"/>
    </location>
</feature>
<feature type="glycosylation site" description="N-linked (GlcNAc...) asparagine" evidence="2">
    <location>
        <position position="58"/>
    </location>
</feature>
<feature type="glycosylation site" description="N-linked (GlcNAc...) asparagine" evidence="2">
    <location>
        <position position="69"/>
    </location>
</feature>
<feature type="glycosylation site" description="N-linked (GlcNAc...) asparagine" evidence="2">
    <location>
        <position position="100"/>
    </location>
</feature>
<feature type="glycosylation site" description="N-linked (GlcNAc...) asparagine" evidence="2">
    <location>
        <position position="290"/>
    </location>
</feature>
<feature type="disulfide bond" evidence="5 15">
    <location>
        <begin position="37"/>
        <end position="208"/>
    </location>
</feature>
<feature type="disulfide bond" evidence="5 15">
    <location>
        <begin position="50"/>
        <end position="72"/>
    </location>
</feature>
<feature type="disulfide bond" evidence="5 15">
    <location>
        <begin position="63"/>
        <end position="105"/>
    </location>
</feature>
<feature type="disulfide bond" evidence="5 15">
    <location>
        <begin position="86"/>
        <end position="122"/>
    </location>
</feature>
<feature type="disulfide bond" evidence="5 8 15">
    <location>
        <begin position="215"/>
        <end position="285"/>
    </location>
</feature>
<feature type="splice variant" id="VSP_045143" description="In isoform 3." evidence="9">
    <original>MRPPSPLPARWLCVLAGALAWALGPAGGQAARLQEECDYVQMIEVQHKQCLEEAQLENETIGCSKMWDNLTCWPATPRGQVVVLACPLIFKLFSSIQGRNVSRSCTDEGWTHLEPGPYPIACGLDDKAASLDEQQTMFYGSVKTGYTIGYGLSLATLLVATAILSLFRKLHCTRNYIHMHLFISFILRAAAVFIKDLALFDSGESDQCSEGSVGCKAAMVFFQYCVMANFFWLLVEGLYLYTLLAVSFFSERKYFWGYILIGW</original>
    <variation>MTRQRVWMRWAVRQPWSFSNIVSWLTSSGCWWRASTCTPCLPSPSSLSGSTSG</variation>
    <location>
        <begin position="1"/>
        <end position="263"/>
    </location>
</feature>
<feature type="splice variant" id="VSP_047271" description="In isoform 4." evidence="9">
    <original>MRPPSPLPARWLCVLAGALAWALGPAGGQAARLQEECDYVQMIEVQHKQCLEEAQLENETI</original>
    <variation>MRAGRRPRLGPWAG</variation>
    <location>
        <begin position="1"/>
        <end position="61"/>
    </location>
</feature>
<feature type="splice variant" id="VSP_047272" description="In isoform 5." evidence="9">
    <location>
        <begin position="1"/>
        <end position="41"/>
    </location>
</feature>
<feature type="splice variant" id="VSP_002010" description="In isoform Long." evidence="11">
    <original>MRPPSPLPARWLCVLAGALAWALGPAGGQAAR</original>
    <variation>MPPPPLLSLRRLGGGWSAVTRLVVAAAGARSRGGRGGSRGAGGGGRGGVARRRRLELRAARSLLGSS</variation>
    <location>
        <begin position="1"/>
        <end position="32"/>
    </location>
</feature>
<feature type="splice variant" id="VSP_047273" description="In isoform 4." evidence="9">
    <location>
        <position position="134"/>
    </location>
</feature>
<feature type="sequence variant" id="VAR_055041" description="In dbSNP:rs17855906." evidence="3">
    <original>R</original>
    <variation>M</variation>
    <location>
        <position position="341"/>
    </location>
</feature>
<feature type="sequence variant" id="VAR_020021" description="In dbSNP:rs3733055.">
    <original>R</original>
    <variation>L</variation>
    <location>
        <position position="445"/>
    </location>
</feature>
<feature type="mutagenesis site" description="Decreased ADCYAP1/PACAP27 potency for VIPR1." evidence="4">
    <original>Y</original>
    <variation>A</variation>
    <location>
        <position position="139"/>
    </location>
</feature>
<feature type="sequence conflict" description="In Ref. 5; BAG57795." evidence="12" ref="5">
    <original>Q</original>
    <variation>R</variation>
    <location>
        <position position="80"/>
    </location>
</feature>
<feature type="sequence conflict" description="In Ref. 2; CAA54814/CAA53046." evidence="12" ref="2">
    <original>G</original>
    <variation>GLLR</variation>
    <location>
        <position position="284"/>
    </location>
</feature>
<feature type="sequence conflict" description="In Ref. 5; BAG51813." evidence="12" ref="5">
    <original>L</original>
    <variation>F</variation>
    <location>
        <position position="320"/>
    </location>
</feature>
<feature type="sequence conflict" description="In Ref. 5; BAG57795." evidence="12" ref="5">
    <original>K</original>
    <variation>R</variation>
    <location>
        <position position="369"/>
    </location>
</feature>
<feature type="helix" evidence="17">
    <location>
        <begin position="38"/>
        <end position="53"/>
    </location>
</feature>
<feature type="strand" evidence="17">
    <location>
        <begin position="61"/>
        <end position="63"/>
    </location>
</feature>
<feature type="strand" evidence="17">
    <location>
        <begin position="82"/>
        <end position="85"/>
    </location>
</feature>
<feature type="helix" evidence="17">
    <location>
        <begin position="88"/>
        <end position="93"/>
    </location>
</feature>
<feature type="strand" evidence="17">
    <location>
        <begin position="100"/>
        <end position="103"/>
    </location>
</feature>
<feature type="turn" evidence="17">
    <location>
        <begin position="110"/>
        <end position="112"/>
    </location>
</feature>
<feature type="strand" evidence="17">
    <location>
        <begin position="113"/>
        <end position="116"/>
    </location>
</feature>
<feature type="helix" evidence="17">
    <location>
        <begin position="117"/>
        <end position="120"/>
    </location>
</feature>
<feature type="helix" evidence="17">
    <location>
        <begin position="122"/>
        <end position="126"/>
    </location>
</feature>
<feature type="helix" evidence="17">
    <location>
        <begin position="129"/>
        <end position="166"/>
    </location>
</feature>
<feature type="helix" evidence="17">
    <location>
        <begin position="168"/>
        <end position="170"/>
    </location>
</feature>
<feature type="helix" evidence="17">
    <location>
        <begin position="173"/>
        <end position="199"/>
    </location>
</feature>
<feature type="helix" evidence="17">
    <location>
        <begin position="206"/>
        <end position="209"/>
    </location>
</feature>
<feature type="helix" evidence="17">
    <location>
        <begin position="213"/>
        <end position="245"/>
    </location>
</feature>
<feature type="strand" evidence="17">
    <location>
        <begin position="246"/>
        <end position="248"/>
    </location>
</feature>
<feature type="helix" evidence="17">
    <location>
        <begin position="251"/>
        <end position="254"/>
    </location>
</feature>
<feature type="helix" evidence="17">
    <location>
        <begin position="255"/>
        <end position="280"/>
    </location>
</feature>
<feature type="strand" evidence="16">
    <location>
        <begin position="284"/>
        <end position="286"/>
    </location>
</feature>
<feature type="helix" evidence="17">
    <location>
        <begin position="294"/>
        <end position="323"/>
    </location>
</feature>
<feature type="strand" evidence="17">
    <location>
        <begin position="324"/>
        <end position="326"/>
    </location>
</feature>
<feature type="helix" evidence="17">
    <location>
        <begin position="337"/>
        <end position="350"/>
    </location>
</feature>
<feature type="helix" evidence="17">
    <location>
        <begin position="352"/>
        <end position="355"/>
    </location>
</feature>
<feature type="strand" evidence="16">
    <location>
        <begin position="357"/>
        <end position="359"/>
    </location>
</feature>
<feature type="turn" evidence="16">
    <location>
        <begin position="362"/>
        <end position="364"/>
    </location>
</feature>
<feature type="helix" evidence="17">
    <location>
        <begin position="366"/>
        <end position="374"/>
    </location>
</feature>
<feature type="helix" evidence="17">
    <location>
        <begin position="377"/>
        <end position="379"/>
    </location>
</feature>
<feature type="helix" evidence="17">
    <location>
        <begin position="380"/>
        <end position="387"/>
    </location>
</feature>
<feature type="turn" evidence="17">
    <location>
        <begin position="388"/>
        <end position="390"/>
    </location>
</feature>
<feature type="helix" evidence="17">
    <location>
        <begin position="393"/>
        <end position="406"/>
    </location>
</feature>
<proteinExistence type="evidence at protein level"/>
<name>VIPR1_HUMAN</name>
<accession>P32241</accession>
<accession>A5JUT9</accession>
<accession>B3KPV1</accession>
<accession>B4DEB5</accession>
<accession>B4DGI4</accession>
<accession>F5H1F5</accession>
<accession>G3V0I1</accession>
<accession>Q15871</accession>
<accession>Q6P2M6</accession>
<evidence type="ECO:0000250" key="1">
    <source>
        <dbReference type="UniProtKB" id="P97751"/>
    </source>
</evidence>
<evidence type="ECO:0000255" key="2"/>
<evidence type="ECO:0000269" key="3">
    <source>
    </source>
</evidence>
<evidence type="ECO:0000269" key="4">
    <source>
    </source>
</evidence>
<evidence type="ECO:0000269" key="5">
    <source>
    </source>
</evidence>
<evidence type="ECO:0000269" key="6">
    <source>
    </source>
</evidence>
<evidence type="ECO:0000269" key="7">
    <source>
    </source>
</evidence>
<evidence type="ECO:0000269" key="8">
    <source>
    </source>
</evidence>
<evidence type="ECO:0000303" key="9">
    <source>
    </source>
</evidence>
<evidence type="ECO:0000303" key="10">
    <source>
    </source>
</evidence>
<evidence type="ECO:0000303" key="11">
    <source>
    </source>
</evidence>
<evidence type="ECO:0000305" key="12"/>
<evidence type="ECO:0000312" key="13">
    <source>
        <dbReference type="HGNC" id="HGNC:12694"/>
    </source>
</evidence>
<evidence type="ECO:0007744" key="14">
    <source>
        <dbReference type="PDB" id="8E3Y"/>
    </source>
</evidence>
<evidence type="ECO:0007744" key="15">
    <source>
        <dbReference type="PDB" id="8E3Z"/>
    </source>
</evidence>
<evidence type="ECO:0007829" key="16">
    <source>
        <dbReference type="PDB" id="6VN7"/>
    </source>
</evidence>
<evidence type="ECO:0007829" key="17">
    <source>
        <dbReference type="PDB" id="8E3Y"/>
    </source>
</evidence>